<proteinExistence type="inferred from homology"/>
<organism>
    <name type="scientific">Sinorhizobium medicae (strain WSM419)</name>
    <name type="common">Ensifer medicae</name>
    <dbReference type="NCBI Taxonomy" id="366394"/>
    <lineage>
        <taxon>Bacteria</taxon>
        <taxon>Pseudomonadati</taxon>
        <taxon>Pseudomonadota</taxon>
        <taxon>Alphaproteobacteria</taxon>
        <taxon>Hyphomicrobiales</taxon>
        <taxon>Rhizobiaceae</taxon>
        <taxon>Sinorhizobium/Ensifer group</taxon>
        <taxon>Sinorhizobium</taxon>
    </lineage>
</organism>
<comment type="function">
    <text evidence="1">Binds directly to 23S rRNA. The L1 stalk is quite mobile in the ribosome, and is involved in E site tRNA release.</text>
</comment>
<comment type="function">
    <text evidence="1">Protein L1 is also a translational repressor protein, it controls the translation of the L11 operon by binding to its mRNA.</text>
</comment>
<comment type="subunit">
    <text evidence="1">Part of the 50S ribosomal subunit.</text>
</comment>
<comment type="similarity">
    <text evidence="1">Belongs to the universal ribosomal protein uL1 family.</text>
</comment>
<reference key="1">
    <citation type="submission" date="2007-06" db="EMBL/GenBank/DDBJ databases">
        <title>Complete sequence of Sinorhizobium medicae WSM419 chromosome.</title>
        <authorList>
            <consortium name="US DOE Joint Genome Institute"/>
            <person name="Copeland A."/>
            <person name="Lucas S."/>
            <person name="Lapidus A."/>
            <person name="Barry K."/>
            <person name="Glavina del Rio T."/>
            <person name="Dalin E."/>
            <person name="Tice H."/>
            <person name="Pitluck S."/>
            <person name="Chain P."/>
            <person name="Malfatti S."/>
            <person name="Shin M."/>
            <person name="Vergez L."/>
            <person name="Schmutz J."/>
            <person name="Larimer F."/>
            <person name="Land M."/>
            <person name="Hauser L."/>
            <person name="Kyrpides N."/>
            <person name="Mikhailova N."/>
            <person name="Reeve W.G."/>
            <person name="Richardson P."/>
        </authorList>
    </citation>
    <scope>NUCLEOTIDE SEQUENCE [LARGE SCALE GENOMIC DNA]</scope>
    <source>
        <strain>WSM419</strain>
    </source>
</reference>
<evidence type="ECO:0000255" key="1">
    <source>
        <dbReference type="HAMAP-Rule" id="MF_01318"/>
    </source>
</evidence>
<evidence type="ECO:0000305" key="2"/>
<accession>A6U848</accession>
<keyword id="KW-0678">Repressor</keyword>
<keyword id="KW-0687">Ribonucleoprotein</keyword>
<keyword id="KW-0689">Ribosomal protein</keyword>
<keyword id="KW-0694">RNA-binding</keyword>
<keyword id="KW-0699">rRNA-binding</keyword>
<keyword id="KW-0810">Translation regulation</keyword>
<keyword id="KW-0820">tRNA-binding</keyword>
<sequence length="232" mass="24136">MAKIAKRVQKSREGVDPAKLYGLTEAVTMIKERATAKFDETIEVAMNLGVDPRHADQMVRGVVNLPNGTGRSVRVAVFARGAKADEAKAAGADVVGAEELVEIVQGGKIDFDRCIATPDMMPLVGRLGKVLGPRGMMPNPKVGTVTMDVAGAVKASKGGAVEFRVEKAGIVHAGIGKASFDAKALEENIRAFADAVIKAKPTGAKGNYVKRVAVSSTMGPGLKIDPATISAA</sequence>
<dbReference type="EMBL" id="CP000738">
    <property type="protein sequence ID" value="ABR59828.1"/>
    <property type="molecule type" value="Genomic_DNA"/>
</dbReference>
<dbReference type="RefSeq" id="WP_011975163.1">
    <property type="nucleotide sequence ID" value="NC_009636.1"/>
</dbReference>
<dbReference type="RefSeq" id="YP_001326663.1">
    <property type="nucleotide sequence ID" value="NC_009636.1"/>
</dbReference>
<dbReference type="SMR" id="A6U848"/>
<dbReference type="STRING" id="366394.Smed_0975"/>
<dbReference type="GeneID" id="61614981"/>
<dbReference type="KEGG" id="smd:Smed_0975"/>
<dbReference type="PATRIC" id="fig|366394.8.peg.4094"/>
<dbReference type="eggNOG" id="COG0081">
    <property type="taxonomic scope" value="Bacteria"/>
</dbReference>
<dbReference type="HOGENOM" id="CLU_062853_0_0_5"/>
<dbReference type="OrthoDB" id="9803740at2"/>
<dbReference type="Proteomes" id="UP000001108">
    <property type="component" value="Chromosome"/>
</dbReference>
<dbReference type="GO" id="GO:0022625">
    <property type="term" value="C:cytosolic large ribosomal subunit"/>
    <property type="evidence" value="ECO:0007669"/>
    <property type="project" value="TreeGrafter"/>
</dbReference>
<dbReference type="GO" id="GO:0019843">
    <property type="term" value="F:rRNA binding"/>
    <property type="evidence" value="ECO:0007669"/>
    <property type="project" value="UniProtKB-UniRule"/>
</dbReference>
<dbReference type="GO" id="GO:0003735">
    <property type="term" value="F:structural constituent of ribosome"/>
    <property type="evidence" value="ECO:0007669"/>
    <property type="project" value="InterPro"/>
</dbReference>
<dbReference type="GO" id="GO:0000049">
    <property type="term" value="F:tRNA binding"/>
    <property type="evidence" value="ECO:0007669"/>
    <property type="project" value="UniProtKB-KW"/>
</dbReference>
<dbReference type="GO" id="GO:0006417">
    <property type="term" value="P:regulation of translation"/>
    <property type="evidence" value="ECO:0007669"/>
    <property type="project" value="UniProtKB-KW"/>
</dbReference>
<dbReference type="GO" id="GO:0006412">
    <property type="term" value="P:translation"/>
    <property type="evidence" value="ECO:0007669"/>
    <property type="project" value="UniProtKB-UniRule"/>
</dbReference>
<dbReference type="CDD" id="cd00403">
    <property type="entry name" value="Ribosomal_L1"/>
    <property type="match status" value="1"/>
</dbReference>
<dbReference type="FunFam" id="3.40.50.790:FF:000001">
    <property type="entry name" value="50S ribosomal protein L1"/>
    <property type="match status" value="1"/>
</dbReference>
<dbReference type="Gene3D" id="3.30.190.20">
    <property type="match status" value="1"/>
</dbReference>
<dbReference type="Gene3D" id="3.40.50.790">
    <property type="match status" value="1"/>
</dbReference>
<dbReference type="HAMAP" id="MF_01318_B">
    <property type="entry name" value="Ribosomal_uL1_B"/>
    <property type="match status" value="1"/>
</dbReference>
<dbReference type="InterPro" id="IPR005878">
    <property type="entry name" value="Ribosom_uL1_bac-type"/>
</dbReference>
<dbReference type="InterPro" id="IPR002143">
    <property type="entry name" value="Ribosomal_uL1"/>
</dbReference>
<dbReference type="InterPro" id="IPR023674">
    <property type="entry name" value="Ribosomal_uL1-like"/>
</dbReference>
<dbReference type="InterPro" id="IPR028364">
    <property type="entry name" value="Ribosomal_uL1/biogenesis"/>
</dbReference>
<dbReference type="InterPro" id="IPR016095">
    <property type="entry name" value="Ribosomal_uL1_3-a/b-sand"/>
</dbReference>
<dbReference type="InterPro" id="IPR023673">
    <property type="entry name" value="Ribosomal_uL1_CS"/>
</dbReference>
<dbReference type="NCBIfam" id="TIGR01169">
    <property type="entry name" value="rplA_bact"/>
    <property type="match status" value="1"/>
</dbReference>
<dbReference type="PANTHER" id="PTHR36427">
    <property type="entry name" value="54S RIBOSOMAL PROTEIN L1, MITOCHONDRIAL"/>
    <property type="match status" value="1"/>
</dbReference>
<dbReference type="PANTHER" id="PTHR36427:SF3">
    <property type="entry name" value="LARGE RIBOSOMAL SUBUNIT PROTEIN UL1M"/>
    <property type="match status" value="1"/>
</dbReference>
<dbReference type="Pfam" id="PF00687">
    <property type="entry name" value="Ribosomal_L1"/>
    <property type="match status" value="1"/>
</dbReference>
<dbReference type="PIRSF" id="PIRSF002155">
    <property type="entry name" value="Ribosomal_L1"/>
    <property type="match status" value="1"/>
</dbReference>
<dbReference type="SUPFAM" id="SSF56808">
    <property type="entry name" value="Ribosomal protein L1"/>
    <property type="match status" value="1"/>
</dbReference>
<dbReference type="PROSITE" id="PS01199">
    <property type="entry name" value="RIBOSOMAL_L1"/>
    <property type="match status" value="1"/>
</dbReference>
<gene>
    <name evidence="1" type="primary">rplA</name>
    <name type="ordered locus">Smed_0975</name>
</gene>
<name>RL1_SINMW</name>
<feature type="chain" id="PRO_1000051923" description="Large ribosomal subunit protein uL1">
    <location>
        <begin position="1"/>
        <end position="232"/>
    </location>
</feature>
<protein>
    <recommendedName>
        <fullName evidence="1">Large ribosomal subunit protein uL1</fullName>
    </recommendedName>
    <alternativeName>
        <fullName evidence="2">50S ribosomal protein L1</fullName>
    </alternativeName>
</protein>